<organism>
    <name type="scientific">Pyrococcus furiosus (strain ATCC 43587 / DSM 3638 / JCM 8422 / Vc1)</name>
    <dbReference type="NCBI Taxonomy" id="186497"/>
    <lineage>
        <taxon>Archaea</taxon>
        <taxon>Methanobacteriati</taxon>
        <taxon>Methanobacteriota</taxon>
        <taxon>Thermococci</taxon>
        <taxon>Thermococcales</taxon>
        <taxon>Thermococcaceae</taxon>
        <taxon>Pyrococcus</taxon>
    </lineage>
</organism>
<keyword id="KW-0030">Aminoacyl-tRNA synthetase</keyword>
<keyword id="KW-0067">ATP-binding</keyword>
<keyword id="KW-0963">Cytoplasm</keyword>
<keyword id="KW-0436">Ligase</keyword>
<keyword id="KW-0479">Metal-binding</keyword>
<keyword id="KW-0547">Nucleotide-binding</keyword>
<keyword id="KW-0648">Protein biosynthesis</keyword>
<keyword id="KW-1185">Reference proteome</keyword>
<keyword id="KW-0694">RNA-binding</keyword>
<keyword id="KW-0820">tRNA-binding</keyword>
<keyword id="KW-0862">Zinc</keyword>
<dbReference type="EC" id="6.1.1.10" evidence="1"/>
<dbReference type="EMBL" id="AE009950">
    <property type="protein sequence ID" value="AAL81154.1"/>
    <property type="molecule type" value="Genomic_DNA"/>
</dbReference>
<dbReference type="SMR" id="Q8U221"/>
<dbReference type="STRING" id="186497.PF1030"/>
<dbReference type="PaxDb" id="186497-PF1030"/>
<dbReference type="KEGG" id="pfu:PF1030"/>
<dbReference type="PATRIC" id="fig|186497.12.peg.1091"/>
<dbReference type="eggNOG" id="arCOG00810">
    <property type="taxonomic scope" value="Archaea"/>
</dbReference>
<dbReference type="HOGENOM" id="CLU_009710_1_2_2"/>
<dbReference type="OrthoDB" id="371856at2157"/>
<dbReference type="PhylomeDB" id="Q8U221"/>
<dbReference type="Proteomes" id="UP000001013">
    <property type="component" value="Chromosome"/>
</dbReference>
<dbReference type="GO" id="GO:0005829">
    <property type="term" value="C:cytosol"/>
    <property type="evidence" value="ECO:0007669"/>
    <property type="project" value="TreeGrafter"/>
</dbReference>
<dbReference type="GO" id="GO:0005524">
    <property type="term" value="F:ATP binding"/>
    <property type="evidence" value="ECO:0007669"/>
    <property type="project" value="UniProtKB-UniRule"/>
</dbReference>
<dbReference type="GO" id="GO:0046872">
    <property type="term" value="F:metal ion binding"/>
    <property type="evidence" value="ECO:0007669"/>
    <property type="project" value="UniProtKB-KW"/>
</dbReference>
<dbReference type="GO" id="GO:0004825">
    <property type="term" value="F:methionine-tRNA ligase activity"/>
    <property type="evidence" value="ECO:0007669"/>
    <property type="project" value="UniProtKB-UniRule"/>
</dbReference>
<dbReference type="GO" id="GO:0000049">
    <property type="term" value="F:tRNA binding"/>
    <property type="evidence" value="ECO:0007669"/>
    <property type="project" value="UniProtKB-KW"/>
</dbReference>
<dbReference type="GO" id="GO:0006431">
    <property type="term" value="P:methionyl-tRNA aminoacylation"/>
    <property type="evidence" value="ECO:0007669"/>
    <property type="project" value="UniProtKB-UniRule"/>
</dbReference>
<dbReference type="CDD" id="cd07957">
    <property type="entry name" value="Anticodon_Ia_Met"/>
    <property type="match status" value="1"/>
</dbReference>
<dbReference type="CDD" id="cd00814">
    <property type="entry name" value="MetRS_core"/>
    <property type="match status" value="1"/>
</dbReference>
<dbReference type="CDD" id="cd02800">
    <property type="entry name" value="tRNA_bind_EcMetRS_like"/>
    <property type="match status" value="1"/>
</dbReference>
<dbReference type="FunFam" id="2.20.28.20:FF:000001">
    <property type="entry name" value="Methionine--tRNA ligase"/>
    <property type="match status" value="1"/>
</dbReference>
<dbReference type="FunFam" id="2.40.50.140:FF:000042">
    <property type="entry name" value="Methionine--tRNA ligase"/>
    <property type="match status" value="1"/>
</dbReference>
<dbReference type="Gene3D" id="3.40.50.620">
    <property type="entry name" value="HUPs"/>
    <property type="match status" value="1"/>
</dbReference>
<dbReference type="Gene3D" id="1.10.730.10">
    <property type="entry name" value="Isoleucyl-tRNA Synthetase, Domain 1"/>
    <property type="match status" value="1"/>
</dbReference>
<dbReference type="Gene3D" id="2.20.28.20">
    <property type="entry name" value="Methionyl-tRNA synthetase, Zn-domain"/>
    <property type="match status" value="1"/>
</dbReference>
<dbReference type="Gene3D" id="2.40.50.140">
    <property type="entry name" value="Nucleic acid-binding proteins"/>
    <property type="match status" value="1"/>
</dbReference>
<dbReference type="HAMAP" id="MF_00098">
    <property type="entry name" value="Met_tRNA_synth_type1"/>
    <property type="match status" value="1"/>
</dbReference>
<dbReference type="InterPro" id="IPR001412">
    <property type="entry name" value="aa-tRNA-synth_I_CS"/>
</dbReference>
<dbReference type="InterPro" id="IPR041872">
    <property type="entry name" value="Anticodon_Met"/>
</dbReference>
<dbReference type="InterPro" id="IPR004495">
    <property type="entry name" value="Met-tRNA-synth_bsu_C"/>
</dbReference>
<dbReference type="InterPro" id="IPR023458">
    <property type="entry name" value="Met-tRNA_ligase_1"/>
</dbReference>
<dbReference type="InterPro" id="IPR014758">
    <property type="entry name" value="Met-tRNA_synth"/>
</dbReference>
<dbReference type="InterPro" id="IPR015413">
    <property type="entry name" value="Methionyl/Leucyl_tRNA_Synth"/>
</dbReference>
<dbReference type="InterPro" id="IPR033911">
    <property type="entry name" value="MetRS_core"/>
</dbReference>
<dbReference type="InterPro" id="IPR029038">
    <property type="entry name" value="MetRS_Zn"/>
</dbReference>
<dbReference type="InterPro" id="IPR012340">
    <property type="entry name" value="NA-bd_OB-fold"/>
</dbReference>
<dbReference type="InterPro" id="IPR014729">
    <property type="entry name" value="Rossmann-like_a/b/a_fold"/>
</dbReference>
<dbReference type="InterPro" id="IPR002547">
    <property type="entry name" value="tRNA-bd_dom"/>
</dbReference>
<dbReference type="InterPro" id="IPR009080">
    <property type="entry name" value="tRNAsynth_Ia_anticodon-bd"/>
</dbReference>
<dbReference type="NCBIfam" id="TIGR00398">
    <property type="entry name" value="metG"/>
    <property type="match status" value="1"/>
</dbReference>
<dbReference type="NCBIfam" id="TIGR00399">
    <property type="entry name" value="metG_C_term"/>
    <property type="match status" value="1"/>
</dbReference>
<dbReference type="NCBIfam" id="NF001100">
    <property type="entry name" value="PRK00133.1"/>
    <property type="match status" value="1"/>
</dbReference>
<dbReference type="PANTHER" id="PTHR45765">
    <property type="entry name" value="METHIONINE--TRNA LIGASE"/>
    <property type="match status" value="1"/>
</dbReference>
<dbReference type="PANTHER" id="PTHR45765:SF1">
    <property type="entry name" value="METHIONINE--TRNA LIGASE, CYTOPLASMIC"/>
    <property type="match status" value="1"/>
</dbReference>
<dbReference type="Pfam" id="PF19303">
    <property type="entry name" value="Anticodon_3"/>
    <property type="match status" value="1"/>
</dbReference>
<dbReference type="Pfam" id="PF09334">
    <property type="entry name" value="tRNA-synt_1g"/>
    <property type="match status" value="1"/>
</dbReference>
<dbReference type="Pfam" id="PF01588">
    <property type="entry name" value="tRNA_bind"/>
    <property type="match status" value="1"/>
</dbReference>
<dbReference type="PRINTS" id="PR01041">
    <property type="entry name" value="TRNASYNTHMET"/>
</dbReference>
<dbReference type="SUPFAM" id="SSF47323">
    <property type="entry name" value="Anticodon-binding domain of a subclass of class I aminoacyl-tRNA synthetases"/>
    <property type="match status" value="1"/>
</dbReference>
<dbReference type="SUPFAM" id="SSF57770">
    <property type="entry name" value="Methionyl-tRNA synthetase (MetRS), Zn-domain"/>
    <property type="match status" value="1"/>
</dbReference>
<dbReference type="SUPFAM" id="SSF50249">
    <property type="entry name" value="Nucleic acid-binding proteins"/>
    <property type="match status" value="1"/>
</dbReference>
<dbReference type="SUPFAM" id="SSF52374">
    <property type="entry name" value="Nucleotidylyl transferase"/>
    <property type="match status" value="1"/>
</dbReference>
<dbReference type="PROSITE" id="PS00178">
    <property type="entry name" value="AA_TRNA_LIGASE_I"/>
    <property type="match status" value="1"/>
</dbReference>
<dbReference type="PROSITE" id="PS50886">
    <property type="entry name" value="TRBD"/>
    <property type="match status" value="1"/>
</dbReference>
<proteinExistence type="inferred from homology"/>
<comment type="function">
    <text evidence="1">Is required not only for elongation of protein synthesis but also for the initiation of all mRNA translation through initiator tRNA(fMet) aminoacylation.</text>
</comment>
<comment type="catalytic activity">
    <reaction evidence="1">
        <text>tRNA(Met) + L-methionine + ATP = L-methionyl-tRNA(Met) + AMP + diphosphate</text>
        <dbReference type="Rhea" id="RHEA:13481"/>
        <dbReference type="Rhea" id="RHEA-COMP:9667"/>
        <dbReference type="Rhea" id="RHEA-COMP:9698"/>
        <dbReference type="ChEBI" id="CHEBI:30616"/>
        <dbReference type="ChEBI" id="CHEBI:33019"/>
        <dbReference type="ChEBI" id="CHEBI:57844"/>
        <dbReference type="ChEBI" id="CHEBI:78442"/>
        <dbReference type="ChEBI" id="CHEBI:78530"/>
        <dbReference type="ChEBI" id="CHEBI:456215"/>
        <dbReference type="EC" id="6.1.1.10"/>
    </reaction>
</comment>
<comment type="cofactor">
    <cofactor evidence="1">
        <name>Zn(2+)</name>
        <dbReference type="ChEBI" id="CHEBI:29105"/>
    </cofactor>
    <text evidence="1">Binds 1 zinc ion per subunit.</text>
</comment>
<comment type="subunit">
    <text evidence="1">Homodimer.</text>
</comment>
<comment type="subcellular location">
    <subcellularLocation>
        <location evidence="1">Cytoplasm</location>
    </subcellularLocation>
</comment>
<comment type="similarity">
    <text evidence="1">Belongs to the class-I aminoacyl-tRNA synthetase family. MetG type 1 subfamily.</text>
</comment>
<reference key="1">
    <citation type="journal article" date="1999" name="Genetics">
        <title>Divergence of the hyperthermophilic archaea Pyrococcus furiosus and P. horikoshii inferred from complete genomic sequences.</title>
        <authorList>
            <person name="Maeder D.L."/>
            <person name="Weiss R.B."/>
            <person name="Dunn D.M."/>
            <person name="Cherry J.L."/>
            <person name="Gonzalez J.M."/>
            <person name="DiRuggiero J."/>
            <person name="Robb F.T."/>
        </authorList>
    </citation>
    <scope>NUCLEOTIDE SEQUENCE [LARGE SCALE GENOMIC DNA]</scope>
    <source>
        <strain>ATCC 43587 / DSM 3638 / JCM 8422 / Vc1</strain>
    </source>
</reference>
<protein>
    <recommendedName>
        <fullName evidence="1">Methionine--tRNA ligase</fullName>
        <ecNumber evidence="1">6.1.1.10</ecNumber>
    </recommendedName>
    <alternativeName>
        <fullName evidence="1">Methionyl-tRNA synthetase</fullName>
        <shortName evidence="1">MetRS</shortName>
    </alternativeName>
</protein>
<feature type="chain" id="PRO_0000139196" description="Methionine--tRNA ligase">
    <location>
        <begin position="1"/>
        <end position="724"/>
    </location>
</feature>
<feature type="domain" description="tRNA-binding" evidence="1">
    <location>
        <begin position="624"/>
        <end position="724"/>
    </location>
</feature>
<feature type="short sequence motif" description="'HIGH' region">
    <location>
        <begin position="11"/>
        <end position="21"/>
    </location>
</feature>
<feature type="short sequence motif" description="'KMSKS' region">
    <location>
        <begin position="344"/>
        <end position="348"/>
    </location>
</feature>
<feature type="binding site" evidence="1">
    <location>
        <position position="143"/>
    </location>
    <ligand>
        <name>Zn(2+)</name>
        <dbReference type="ChEBI" id="CHEBI:29105"/>
    </ligand>
</feature>
<feature type="binding site" evidence="1">
    <location>
        <position position="146"/>
    </location>
    <ligand>
        <name>Zn(2+)</name>
        <dbReference type="ChEBI" id="CHEBI:29105"/>
    </ligand>
</feature>
<feature type="binding site" evidence="1">
    <location>
        <position position="156"/>
    </location>
    <ligand>
        <name>Zn(2+)</name>
        <dbReference type="ChEBI" id="CHEBI:29105"/>
    </ligand>
</feature>
<feature type="binding site" evidence="1">
    <location>
        <position position="159"/>
    </location>
    <ligand>
        <name>Zn(2+)</name>
        <dbReference type="ChEBI" id="CHEBI:29105"/>
    </ligand>
</feature>
<feature type="binding site" evidence="1">
    <location>
        <position position="347"/>
    </location>
    <ligand>
        <name>ATP</name>
        <dbReference type="ChEBI" id="CHEBI:30616"/>
    </ligand>
</feature>
<evidence type="ECO:0000255" key="1">
    <source>
        <dbReference type="HAMAP-Rule" id="MF_00098"/>
    </source>
</evidence>
<sequence>MVRYMVTAALPYANGPIHAGHLAGAYLPADIFVRYLRLKGEDVVFICGTDEHGTPISFRALNEKRSPREIVDEFHEHIKTAFQRVKISFDYFGRTELPVHYRLSQEFFLKALENGYLVKKVTKQAYCEHDKRFLPDRFVIGTCPYCGAENQRGDQCEVCGRPLTPEILIEPRCAFCKNPITFRESTHYYIKMQEFEEKLKEWIKEKDWKPNVKNMVLGWIEEGLEERAITRDLDWGIPVPLDEEDMKNKVLYVWFEAPIGYISLTIEYFKRIGKPNEWKKYWLNLDGQTRVIHFIGKDNIPFHAIFWPAFLMAYGKYKDEEVEAEWNLPYDIPANEYLTLEGKKFSTSRNWAIWIHEFLDVFPADYLRYYLTSIMPETRDSDFSFAEFKTKINEELVNVLGNFVYRALTFVNRYFDGIVPERGELDELDRQALEEIEKTFEEVGKLIREYRFKDALKKVMNLAGFGNRYFDYKEPWKTIKEDKTRTGTTINISLQIVKALGILLEPFLPDASEKIWHFLNLEEVKTWRFTELPAGHKVRKPEILFKKASDDQIIYFILNYMGRNNPDAARELLEKYYKLEDVEKVAIEKFGEEDGRFMLKKIFKEKYKGEKKGEQKMQYVSFEEFSKIDLRIGKIVEVQDHPNADKLYVVKVDLGGEIRTLVAGLKKYYKPEELLNRYVVIVANLEPKKLRGVESQGMLLAADDGEKVALLMPDKEVKLGAKVR</sequence>
<accession>Q8U221</accession>
<gene>
    <name evidence="1" type="primary">metG</name>
    <name type="ordered locus">PF1030</name>
</gene>
<name>SYM_PYRFU</name>